<name>OCTC_BOVIN</name>
<gene>
    <name type="primary">CROT</name>
    <name type="synonym">COT</name>
</gene>
<comment type="function">
    <text evidence="3">Beta-oxidation of fatty acids. The highest activity concerns the C6 to C10 chain length substrate.</text>
</comment>
<comment type="catalytic activity">
    <reaction evidence="3">
        <text>octanoyl-CoA + (R)-carnitine = O-octanoyl-(R)-carnitine + CoA</text>
        <dbReference type="Rhea" id="RHEA:17177"/>
        <dbReference type="ChEBI" id="CHEBI:16347"/>
        <dbReference type="ChEBI" id="CHEBI:18102"/>
        <dbReference type="ChEBI" id="CHEBI:57287"/>
        <dbReference type="ChEBI" id="CHEBI:57386"/>
        <dbReference type="EC" id="2.3.1.137"/>
    </reaction>
</comment>
<comment type="catalytic activity">
    <reaction evidence="3">
        <text>4,8-dimethylnonanoyl-CoA + (R)-carnitine = O-4,8-dimethylnonanoyl-(R)-carnitine + CoA</text>
        <dbReference type="Rhea" id="RHEA:44860"/>
        <dbReference type="ChEBI" id="CHEBI:16347"/>
        <dbReference type="ChEBI" id="CHEBI:57287"/>
        <dbReference type="ChEBI" id="CHEBI:77061"/>
        <dbReference type="ChEBI" id="CHEBI:84654"/>
    </reaction>
</comment>
<comment type="pathway">
    <text>Lipid metabolism; fatty acid beta-oxidation.</text>
</comment>
<comment type="subunit">
    <text evidence="6">Monomer.</text>
</comment>
<comment type="subcellular location">
    <subcellularLocation>
        <location evidence="6">Peroxisome</location>
    </subcellularLocation>
</comment>
<comment type="similarity">
    <text evidence="6">Belongs to the carnitine/choline acetyltransferase family.</text>
</comment>
<dbReference type="EC" id="2.3.1.137" evidence="3"/>
<dbReference type="EMBL" id="U65745">
    <property type="protein sequence ID" value="AAC48758.1"/>
    <property type="molecule type" value="mRNA"/>
</dbReference>
<dbReference type="RefSeq" id="NP_803460.1">
    <property type="nucleotide sequence ID" value="NM_177494.2"/>
</dbReference>
<dbReference type="RefSeq" id="XP_024846207.1">
    <property type="nucleotide sequence ID" value="XM_024990439.2"/>
</dbReference>
<dbReference type="RefSeq" id="XP_024846208.1">
    <property type="nucleotide sequence ID" value="XM_024990440.2"/>
</dbReference>
<dbReference type="SMR" id="O19094"/>
<dbReference type="FunCoup" id="O19094">
    <property type="interactions" value="766"/>
</dbReference>
<dbReference type="STRING" id="9913.ENSBTAP00000028699"/>
<dbReference type="PaxDb" id="9913-ENSBTAP00000028699"/>
<dbReference type="PeptideAtlas" id="O19094"/>
<dbReference type="GeneID" id="281092"/>
<dbReference type="KEGG" id="bta:281092"/>
<dbReference type="CTD" id="54677"/>
<dbReference type="VEuPathDB" id="HostDB:ENSBTAG00000021535"/>
<dbReference type="eggNOG" id="KOG3718">
    <property type="taxonomic scope" value="Eukaryota"/>
</dbReference>
<dbReference type="InParanoid" id="O19094"/>
<dbReference type="OrthoDB" id="240216at2759"/>
<dbReference type="BRENDA" id="2.3.1.137">
    <property type="organism ID" value="908"/>
</dbReference>
<dbReference type="Reactome" id="R-BTA-389887">
    <property type="pathway name" value="Beta-oxidation of pristanoyl-CoA"/>
</dbReference>
<dbReference type="Reactome" id="R-BTA-9033241">
    <property type="pathway name" value="Peroxisomal protein import"/>
</dbReference>
<dbReference type="UniPathway" id="UPA00659"/>
<dbReference type="Proteomes" id="UP000009136">
    <property type="component" value="Chromosome 4"/>
</dbReference>
<dbReference type="Bgee" id="ENSBTAG00000021535">
    <property type="expression patterns" value="Expressed in liver and 108 other cell types or tissues"/>
</dbReference>
<dbReference type="GO" id="GO:0005777">
    <property type="term" value="C:peroxisome"/>
    <property type="evidence" value="ECO:0000318"/>
    <property type="project" value="GO_Central"/>
</dbReference>
<dbReference type="GO" id="GO:0008458">
    <property type="term" value="F:carnitine O-octanoyltransferase activity"/>
    <property type="evidence" value="ECO:0000250"/>
    <property type="project" value="UniProtKB"/>
</dbReference>
<dbReference type="GO" id="GO:0009437">
    <property type="term" value="P:carnitine metabolic process"/>
    <property type="evidence" value="ECO:0000250"/>
    <property type="project" value="UniProtKB"/>
</dbReference>
<dbReference type="GO" id="GO:0015936">
    <property type="term" value="P:coenzyme A metabolic process"/>
    <property type="evidence" value="ECO:0000250"/>
    <property type="project" value="UniProtKB"/>
</dbReference>
<dbReference type="GO" id="GO:0006635">
    <property type="term" value="P:fatty acid beta-oxidation"/>
    <property type="evidence" value="ECO:0007669"/>
    <property type="project" value="UniProtKB-UniPathway"/>
</dbReference>
<dbReference type="GO" id="GO:0006631">
    <property type="term" value="P:fatty acid metabolic process"/>
    <property type="evidence" value="ECO:0000250"/>
    <property type="project" value="UniProtKB"/>
</dbReference>
<dbReference type="GO" id="GO:0006091">
    <property type="term" value="P:generation of precursor metabolites and energy"/>
    <property type="evidence" value="ECO:0000250"/>
    <property type="project" value="UniProtKB"/>
</dbReference>
<dbReference type="GO" id="GO:0051791">
    <property type="term" value="P:medium-chain fatty acid metabolic process"/>
    <property type="evidence" value="ECO:0000250"/>
    <property type="project" value="UniProtKB"/>
</dbReference>
<dbReference type="FunFam" id="3.30.559.70:FF:000006">
    <property type="entry name" value="Peroxisomal carnitine O-octanoyltransferase"/>
    <property type="match status" value="1"/>
</dbReference>
<dbReference type="Gene3D" id="3.30.559.10">
    <property type="entry name" value="Chloramphenicol acetyltransferase-like domain"/>
    <property type="match status" value="1"/>
</dbReference>
<dbReference type="Gene3D" id="1.10.275.20">
    <property type="entry name" value="Choline/Carnitine o-acyltransferase"/>
    <property type="match status" value="1"/>
</dbReference>
<dbReference type="Gene3D" id="3.30.559.70">
    <property type="entry name" value="Choline/Carnitine o-acyltransferase, domain 2"/>
    <property type="match status" value="1"/>
</dbReference>
<dbReference type="InterPro" id="IPR000542">
    <property type="entry name" value="Carn_acyl_trans"/>
</dbReference>
<dbReference type="InterPro" id="IPR042572">
    <property type="entry name" value="Carn_acyl_trans_N"/>
</dbReference>
<dbReference type="InterPro" id="IPR023213">
    <property type="entry name" value="CAT-like_dom_sf"/>
</dbReference>
<dbReference type="InterPro" id="IPR039551">
    <property type="entry name" value="Cho/carn_acyl_trans"/>
</dbReference>
<dbReference type="InterPro" id="IPR042231">
    <property type="entry name" value="Cho/carn_acyl_trans_2"/>
</dbReference>
<dbReference type="PANTHER" id="PTHR22589">
    <property type="entry name" value="CARNITINE O-ACYLTRANSFERASE"/>
    <property type="match status" value="1"/>
</dbReference>
<dbReference type="PANTHER" id="PTHR22589:SF67">
    <property type="entry name" value="PEROXISOMAL CARNITINE O-OCTANOYLTRANSFERASE"/>
    <property type="match status" value="1"/>
</dbReference>
<dbReference type="Pfam" id="PF00755">
    <property type="entry name" value="Carn_acyltransf"/>
    <property type="match status" value="1"/>
</dbReference>
<dbReference type="SUPFAM" id="SSF52777">
    <property type="entry name" value="CoA-dependent acyltransferases"/>
    <property type="match status" value="2"/>
</dbReference>
<dbReference type="PROSITE" id="PS00439">
    <property type="entry name" value="ACYLTRANSF_C_1"/>
    <property type="match status" value="1"/>
</dbReference>
<dbReference type="PROSITE" id="PS00440">
    <property type="entry name" value="ACYLTRANSF_C_2"/>
    <property type="match status" value="1"/>
</dbReference>
<organism>
    <name type="scientific">Bos taurus</name>
    <name type="common">Bovine</name>
    <dbReference type="NCBI Taxonomy" id="9913"/>
    <lineage>
        <taxon>Eukaryota</taxon>
        <taxon>Metazoa</taxon>
        <taxon>Chordata</taxon>
        <taxon>Craniata</taxon>
        <taxon>Vertebrata</taxon>
        <taxon>Euteleostomi</taxon>
        <taxon>Mammalia</taxon>
        <taxon>Eutheria</taxon>
        <taxon>Laurasiatheria</taxon>
        <taxon>Artiodactyla</taxon>
        <taxon>Ruminantia</taxon>
        <taxon>Pecora</taxon>
        <taxon>Bovidae</taxon>
        <taxon>Bovinae</taxon>
        <taxon>Bos</taxon>
    </lineage>
</organism>
<sequence>MENQLAKSTEERTFQYQDSLPSLPVPSLEESLKKYLESVKPFANEEEYKNTEAIVWKFQNGIGEKLQQKLLQRAKGRRNWLEEWWLNVAYLDVRIPSQLNVNFGGPASHIEHYWPPKEGTQLERGSISLWHNLNYWQLLRKEKLAVEKVGNTPLDMNQFRMLFSTCKIPGITRDSIINYFRTESEGHSPSHLAVLCRGRVFVFDVMHEGYLMTAPEIQRQLTYIQKKCHSEPDGPGVAALTTEERTRWAKAREYLISLNPENLTILEKIQSSLLVFCLDDDSPHVTPEDYSQVSAKILNGDPTVRWGDKSYNLIAFSNGVFGSNCDHAPFDAMVLVKVCYYVDENILENEGRWKGSEKVRDIPVPEELVFTVDEKVLNDINQAKAQYFKQVSDLQLVVYAFTSFGKKLTKEKQLHPDTFIQLALQLAYYRLHGRPGCCYETAMTRLFYHGRTETVRPCTVEAVNWCQSMQNPSTSLLERKHMMLEAFAKHNKMMKDCSTGKGFDRHLLGLSLIAKEEGLPVPELFTDPLFSRSGGGGNFVLSTSLVGYLRVQGVMVPMVHNGYGFFYHIRDDRFVVSCSAWKSCPETDAEKLVQQVFHAFCDMMQLMEMPHL</sequence>
<protein>
    <recommendedName>
        <fullName>Peroxisomal carnitine O-octanoyltransferase</fullName>
        <shortName>COT</shortName>
        <ecNumber evidence="3">2.3.1.137</ecNumber>
    </recommendedName>
</protein>
<accession>O19094</accession>
<evidence type="ECO:0000250" key="1"/>
<evidence type="ECO:0000250" key="2">
    <source>
        <dbReference type="UniProtKB" id="Q9DC50"/>
    </source>
</evidence>
<evidence type="ECO:0000250" key="3">
    <source>
        <dbReference type="UniProtKB" id="Q9UKG9"/>
    </source>
</evidence>
<evidence type="ECO:0000255" key="4"/>
<evidence type="ECO:0000269" key="5">
    <source>
    </source>
</evidence>
<evidence type="ECO:0000305" key="6"/>
<keyword id="KW-0007">Acetylation</keyword>
<keyword id="KW-0012">Acyltransferase</keyword>
<keyword id="KW-0276">Fatty acid metabolism</keyword>
<keyword id="KW-0443">Lipid metabolism</keyword>
<keyword id="KW-0576">Peroxisome</keyword>
<keyword id="KW-1185">Reference proteome</keyword>
<keyword id="KW-0808">Transferase</keyword>
<keyword id="KW-0813">Transport</keyword>
<reference key="1">
    <citation type="journal article" date="1997" name="Eur. J. Biochem.">
        <title>cDNA cloning, recombinant expression, and site-directed mutagenesis of bovine liver carnitine octanoyltransferase -- Arg505 binds the carboxylate group of carnitine.</title>
        <authorList>
            <person name="Cronin C.N."/>
        </authorList>
    </citation>
    <scope>NUCLEOTIDE SEQUENCE [MRNA]</scope>
    <scope>MUTAGENESIS</scope>
    <source>
        <tissue>Liver</tissue>
    </source>
</reference>
<proteinExistence type="evidence at protein level"/>
<feature type="chain" id="PRO_0000210168" description="Peroxisomal carnitine O-octanoyltransferase">
    <location>
        <begin position="1"/>
        <end position="612"/>
    </location>
</feature>
<feature type="short sequence motif" description="Microbody targeting signal" evidence="4">
    <location>
        <begin position="610"/>
        <end position="612"/>
    </location>
</feature>
<feature type="active site" description="Proton acceptor" evidence="1">
    <location>
        <position position="327"/>
    </location>
</feature>
<feature type="binding site" evidence="1">
    <location>
        <position position="406"/>
    </location>
    <ligand>
        <name>CoA</name>
        <dbReference type="ChEBI" id="CHEBI:57287"/>
    </ligand>
</feature>
<feature type="binding site" evidence="1">
    <location>
        <begin position="410"/>
        <end position="417"/>
    </location>
    <ligand>
        <name>CoA</name>
        <dbReference type="ChEBI" id="CHEBI:57287"/>
    </ligand>
</feature>
<feature type="binding site" evidence="1">
    <location>
        <position position="439"/>
    </location>
    <ligand>
        <name>(R)-carnitine</name>
        <dbReference type="ChEBI" id="CHEBI:16347"/>
    </ligand>
</feature>
<feature type="binding site" evidence="1">
    <location>
        <position position="441"/>
    </location>
    <ligand>
        <name>(R)-carnitine</name>
        <dbReference type="ChEBI" id="CHEBI:16347"/>
    </ligand>
</feature>
<feature type="binding site" evidence="1">
    <location>
        <position position="452"/>
    </location>
    <ligand>
        <name>(R)-carnitine</name>
        <dbReference type="ChEBI" id="CHEBI:16347"/>
    </ligand>
</feature>
<feature type="modified residue" description="N-acetylmethionine" evidence="3">
    <location>
        <position position="1"/>
    </location>
</feature>
<feature type="modified residue" description="N6-succinyllysine" evidence="2">
    <location>
        <position position="40"/>
    </location>
</feature>
<feature type="modified residue" description="N6-succinyllysine" evidence="2">
    <location>
        <position position="57"/>
    </location>
</feature>
<feature type="modified residue" description="N6-acetyllysine; alternate" evidence="2">
    <location>
        <position position="406"/>
    </location>
</feature>
<feature type="modified residue" description="N6-succinyllysine; alternate" evidence="2">
    <location>
        <position position="406"/>
    </location>
</feature>
<feature type="mutagenesis site" description="Increase of KM towards carnitine." evidence="5">
    <original>R</original>
    <variation>N</variation>
    <location>
        <position position="505"/>
    </location>
</feature>